<keyword id="KW-0002">3D-structure</keyword>
<keyword id="KW-0238">DNA-binding</keyword>
<keyword id="KW-1185">Reference proteome</keyword>
<keyword id="KW-0804">Transcription</keyword>
<keyword id="KW-0805">Transcription regulation</keyword>
<feature type="chain" id="PRO_0000050691" description="Uncharacterized HTH-type transcriptional regulator YurK">
    <location>
        <begin position="1"/>
        <end position="242"/>
    </location>
</feature>
<feature type="domain" description="HTH gntR-type" evidence="1">
    <location>
        <begin position="8"/>
        <end position="76"/>
    </location>
</feature>
<feature type="DNA-binding region" description="H-T-H motif" evidence="1">
    <location>
        <begin position="36"/>
        <end position="55"/>
    </location>
</feature>
<feature type="strand" evidence="2">
    <location>
        <begin position="102"/>
        <end position="110"/>
    </location>
</feature>
<feature type="helix" evidence="2">
    <location>
        <begin position="113"/>
        <end position="119"/>
    </location>
</feature>
<feature type="strand" evidence="2">
    <location>
        <begin position="126"/>
        <end position="149"/>
    </location>
</feature>
<feature type="turn" evidence="2">
    <location>
        <begin position="150"/>
        <end position="152"/>
    </location>
</feature>
<feature type="helix" evidence="2">
    <location>
        <begin position="156"/>
        <end position="159"/>
    </location>
</feature>
<feature type="helix" evidence="2">
    <location>
        <begin position="166"/>
        <end position="174"/>
    </location>
</feature>
<feature type="strand" evidence="2">
    <location>
        <begin position="180"/>
        <end position="189"/>
    </location>
</feature>
<feature type="helix" evidence="2">
    <location>
        <begin position="192"/>
        <end position="198"/>
    </location>
</feature>
<feature type="strand" evidence="2">
    <location>
        <begin position="205"/>
        <end position="215"/>
    </location>
</feature>
<feature type="helix" evidence="2">
    <location>
        <begin position="216"/>
        <end position="218"/>
    </location>
</feature>
<feature type="strand" evidence="2">
    <location>
        <begin position="219"/>
        <end position="229"/>
    </location>
</feature>
<feature type="turn" evidence="2">
    <location>
        <begin position="230"/>
        <end position="232"/>
    </location>
</feature>
<feature type="strand" evidence="2">
    <location>
        <begin position="233"/>
        <end position="237"/>
    </location>
</feature>
<name>YURK_BACSU</name>
<evidence type="ECO:0000255" key="1">
    <source>
        <dbReference type="PROSITE-ProRule" id="PRU00307"/>
    </source>
</evidence>
<evidence type="ECO:0007829" key="2">
    <source>
        <dbReference type="PDB" id="2IKK"/>
    </source>
</evidence>
<gene>
    <name type="primary">yurK</name>
    <name type="ordered locus">BSU32560</name>
</gene>
<proteinExistence type="evidence at protein level"/>
<dbReference type="EMBL" id="AL009126">
    <property type="protein sequence ID" value="CAB15246.1"/>
    <property type="molecule type" value="Genomic_DNA"/>
</dbReference>
<dbReference type="PIR" id="B70018">
    <property type="entry name" value="B70018"/>
</dbReference>
<dbReference type="RefSeq" id="NP_391136.2">
    <property type="nucleotide sequence ID" value="NC_000964.3"/>
</dbReference>
<dbReference type="PDB" id="2IKK">
    <property type="method" value="X-ray"/>
    <property type="resolution" value="1.80 A"/>
    <property type="chains" value="A/B=94-242"/>
</dbReference>
<dbReference type="PDBsum" id="2IKK"/>
<dbReference type="SMR" id="O32152"/>
<dbReference type="FunCoup" id="O32152">
    <property type="interactions" value="13"/>
</dbReference>
<dbReference type="STRING" id="224308.BSU32560"/>
<dbReference type="PaxDb" id="224308-BSU32560"/>
<dbReference type="DNASU" id="936688"/>
<dbReference type="EnsemblBacteria" id="CAB15246">
    <property type="protein sequence ID" value="CAB15246"/>
    <property type="gene ID" value="BSU_32560"/>
</dbReference>
<dbReference type="GeneID" id="936688"/>
<dbReference type="KEGG" id="bsu:BSU32560"/>
<dbReference type="PATRIC" id="fig|224308.179.peg.3526"/>
<dbReference type="eggNOG" id="COG2188">
    <property type="taxonomic scope" value="Bacteria"/>
</dbReference>
<dbReference type="InParanoid" id="O32152"/>
<dbReference type="OrthoDB" id="457376at2"/>
<dbReference type="BioCyc" id="BSUB:BSU32560-MONOMER"/>
<dbReference type="EvolutionaryTrace" id="O32152"/>
<dbReference type="PRO" id="PR:O32152"/>
<dbReference type="Proteomes" id="UP000001570">
    <property type="component" value="Chromosome"/>
</dbReference>
<dbReference type="GO" id="GO:0003677">
    <property type="term" value="F:DNA binding"/>
    <property type="evidence" value="ECO:0007669"/>
    <property type="project" value="UniProtKB-KW"/>
</dbReference>
<dbReference type="GO" id="GO:0003700">
    <property type="term" value="F:DNA-binding transcription factor activity"/>
    <property type="evidence" value="ECO:0007669"/>
    <property type="project" value="InterPro"/>
</dbReference>
<dbReference type="GO" id="GO:0045892">
    <property type="term" value="P:negative regulation of DNA-templated transcription"/>
    <property type="evidence" value="ECO:0000318"/>
    <property type="project" value="GO_Central"/>
</dbReference>
<dbReference type="CDD" id="cd07377">
    <property type="entry name" value="WHTH_GntR"/>
    <property type="match status" value="1"/>
</dbReference>
<dbReference type="FunFam" id="1.10.10.10:FF:000079">
    <property type="entry name" value="GntR family transcriptional regulator"/>
    <property type="match status" value="1"/>
</dbReference>
<dbReference type="Gene3D" id="3.40.1410.10">
    <property type="entry name" value="Chorismate lyase-like"/>
    <property type="match status" value="1"/>
</dbReference>
<dbReference type="Gene3D" id="1.10.10.10">
    <property type="entry name" value="Winged helix-like DNA-binding domain superfamily/Winged helix DNA-binding domain"/>
    <property type="match status" value="1"/>
</dbReference>
<dbReference type="InterPro" id="IPR050679">
    <property type="entry name" value="Bact_HTH_transcr_reg"/>
</dbReference>
<dbReference type="InterPro" id="IPR028978">
    <property type="entry name" value="Chorismate_lyase_/UTRA_dom_sf"/>
</dbReference>
<dbReference type="InterPro" id="IPR000524">
    <property type="entry name" value="Tscrpt_reg_HTH_GntR"/>
</dbReference>
<dbReference type="InterPro" id="IPR011663">
    <property type="entry name" value="UTRA"/>
</dbReference>
<dbReference type="InterPro" id="IPR036388">
    <property type="entry name" value="WH-like_DNA-bd_sf"/>
</dbReference>
<dbReference type="InterPro" id="IPR036390">
    <property type="entry name" value="WH_DNA-bd_sf"/>
</dbReference>
<dbReference type="NCBIfam" id="NF008491">
    <property type="entry name" value="PRK11402.1"/>
    <property type="match status" value="1"/>
</dbReference>
<dbReference type="PANTHER" id="PTHR44846">
    <property type="entry name" value="MANNOSYL-D-GLYCERATE TRANSPORT/METABOLISM SYSTEM REPRESSOR MNGR-RELATED"/>
    <property type="match status" value="1"/>
</dbReference>
<dbReference type="PANTHER" id="PTHR44846:SF1">
    <property type="entry name" value="MANNOSYL-D-GLYCERATE TRANSPORT_METABOLISM SYSTEM REPRESSOR MNGR-RELATED"/>
    <property type="match status" value="1"/>
</dbReference>
<dbReference type="Pfam" id="PF00392">
    <property type="entry name" value="GntR"/>
    <property type="match status" value="1"/>
</dbReference>
<dbReference type="Pfam" id="PF07702">
    <property type="entry name" value="UTRA"/>
    <property type="match status" value="1"/>
</dbReference>
<dbReference type="PRINTS" id="PR00035">
    <property type="entry name" value="HTHGNTR"/>
</dbReference>
<dbReference type="SMART" id="SM00345">
    <property type="entry name" value="HTH_GNTR"/>
    <property type="match status" value="1"/>
</dbReference>
<dbReference type="SMART" id="SM00866">
    <property type="entry name" value="UTRA"/>
    <property type="match status" value="1"/>
</dbReference>
<dbReference type="SUPFAM" id="SSF64288">
    <property type="entry name" value="Chorismate lyase-like"/>
    <property type="match status" value="1"/>
</dbReference>
<dbReference type="SUPFAM" id="SSF46785">
    <property type="entry name" value="Winged helix' DNA-binding domain"/>
    <property type="match status" value="1"/>
</dbReference>
<dbReference type="PROSITE" id="PS50949">
    <property type="entry name" value="HTH_GNTR"/>
    <property type="match status" value="1"/>
</dbReference>
<protein>
    <recommendedName>
        <fullName>Uncharacterized HTH-type transcriptional regulator YurK</fullName>
    </recommendedName>
</protein>
<reference key="1">
    <citation type="journal article" date="1997" name="Nature">
        <title>The complete genome sequence of the Gram-positive bacterium Bacillus subtilis.</title>
        <authorList>
            <person name="Kunst F."/>
            <person name="Ogasawara N."/>
            <person name="Moszer I."/>
            <person name="Albertini A.M."/>
            <person name="Alloni G."/>
            <person name="Azevedo V."/>
            <person name="Bertero M.G."/>
            <person name="Bessieres P."/>
            <person name="Bolotin A."/>
            <person name="Borchert S."/>
            <person name="Borriss R."/>
            <person name="Boursier L."/>
            <person name="Brans A."/>
            <person name="Braun M."/>
            <person name="Brignell S.C."/>
            <person name="Bron S."/>
            <person name="Brouillet S."/>
            <person name="Bruschi C.V."/>
            <person name="Caldwell B."/>
            <person name="Capuano V."/>
            <person name="Carter N.M."/>
            <person name="Choi S.-K."/>
            <person name="Codani J.-J."/>
            <person name="Connerton I.F."/>
            <person name="Cummings N.J."/>
            <person name="Daniel R.A."/>
            <person name="Denizot F."/>
            <person name="Devine K.M."/>
            <person name="Duesterhoeft A."/>
            <person name="Ehrlich S.D."/>
            <person name="Emmerson P.T."/>
            <person name="Entian K.-D."/>
            <person name="Errington J."/>
            <person name="Fabret C."/>
            <person name="Ferrari E."/>
            <person name="Foulger D."/>
            <person name="Fritz C."/>
            <person name="Fujita M."/>
            <person name="Fujita Y."/>
            <person name="Fuma S."/>
            <person name="Galizzi A."/>
            <person name="Galleron N."/>
            <person name="Ghim S.-Y."/>
            <person name="Glaser P."/>
            <person name="Goffeau A."/>
            <person name="Golightly E.J."/>
            <person name="Grandi G."/>
            <person name="Guiseppi G."/>
            <person name="Guy B.J."/>
            <person name="Haga K."/>
            <person name="Haiech J."/>
            <person name="Harwood C.R."/>
            <person name="Henaut A."/>
            <person name="Hilbert H."/>
            <person name="Holsappel S."/>
            <person name="Hosono S."/>
            <person name="Hullo M.-F."/>
            <person name="Itaya M."/>
            <person name="Jones L.-M."/>
            <person name="Joris B."/>
            <person name="Karamata D."/>
            <person name="Kasahara Y."/>
            <person name="Klaerr-Blanchard M."/>
            <person name="Klein C."/>
            <person name="Kobayashi Y."/>
            <person name="Koetter P."/>
            <person name="Koningstein G."/>
            <person name="Krogh S."/>
            <person name="Kumano M."/>
            <person name="Kurita K."/>
            <person name="Lapidus A."/>
            <person name="Lardinois S."/>
            <person name="Lauber J."/>
            <person name="Lazarevic V."/>
            <person name="Lee S.-M."/>
            <person name="Levine A."/>
            <person name="Liu H."/>
            <person name="Masuda S."/>
            <person name="Mauel C."/>
            <person name="Medigue C."/>
            <person name="Medina N."/>
            <person name="Mellado R.P."/>
            <person name="Mizuno M."/>
            <person name="Moestl D."/>
            <person name="Nakai S."/>
            <person name="Noback M."/>
            <person name="Noone D."/>
            <person name="O'Reilly M."/>
            <person name="Ogawa K."/>
            <person name="Ogiwara A."/>
            <person name="Oudega B."/>
            <person name="Park S.-H."/>
            <person name="Parro V."/>
            <person name="Pohl T.M."/>
            <person name="Portetelle D."/>
            <person name="Porwollik S."/>
            <person name="Prescott A.M."/>
            <person name="Presecan E."/>
            <person name="Pujic P."/>
            <person name="Purnelle B."/>
            <person name="Rapoport G."/>
            <person name="Rey M."/>
            <person name="Reynolds S."/>
            <person name="Rieger M."/>
            <person name="Rivolta C."/>
            <person name="Rocha E."/>
            <person name="Roche B."/>
            <person name="Rose M."/>
            <person name="Sadaie Y."/>
            <person name="Sato T."/>
            <person name="Scanlan E."/>
            <person name="Schleich S."/>
            <person name="Schroeter R."/>
            <person name="Scoffone F."/>
            <person name="Sekiguchi J."/>
            <person name="Sekowska A."/>
            <person name="Seror S.J."/>
            <person name="Serror P."/>
            <person name="Shin B.-S."/>
            <person name="Soldo B."/>
            <person name="Sorokin A."/>
            <person name="Tacconi E."/>
            <person name="Takagi T."/>
            <person name="Takahashi H."/>
            <person name="Takemaru K."/>
            <person name="Takeuchi M."/>
            <person name="Tamakoshi A."/>
            <person name="Tanaka T."/>
            <person name="Terpstra P."/>
            <person name="Tognoni A."/>
            <person name="Tosato V."/>
            <person name="Uchiyama S."/>
            <person name="Vandenbol M."/>
            <person name="Vannier F."/>
            <person name="Vassarotti A."/>
            <person name="Viari A."/>
            <person name="Wambutt R."/>
            <person name="Wedler E."/>
            <person name="Wedler H."/>
            <person name="Weitzenegger T."/>
            <person name="Winters P."/>
            <person name="Wipat A."/>
            <person name="Yamamoto H."/>
            <person name="Yamane K."/>
            <person name="Yasumoto K."/>
            <person name="Yata K."/>
            <person name="Yoshida K."/>
            <person name="Yoshikawa H.-F."/>
            <person name="Zumstein E."/>
            <person name="Yoshikawa H."/>
            <person name="Danchin A."/>
        </authorList>
    </citation>
    <scope>NUCLEOTIDE SEQUENCE [LARGE SCALE GENOMIC DNA]</scope>
    <source>
        <strain>168</strain>
    </source>
</reference>
<organism>
    <name type="scientific">Bacillus subtilis (strain 168)</name>
    <dbReference type="NCBI Taxonomy" id="224308"/>
    <lineage>
        <taxon>Bacteria</taxon>
        <taxon>Bacillati</taxon>
        <taxon>Bacillota</taxon>
        <taxon>Bacilli</taxon>
        <taxon>Bacillales</taxon>
        <taxon>Bacillaceae</taxon>
        <taxon>Bacillus</taxon>
    </lineage>
</organism>
<accession>O32152</accession>
<sequence>MLNNGSSTPLYIQLKQIITDDIKKGVYSPTAKLPTENELCTKYNVSRITVRKAILDLVEEGYLIRQQGKGTFVKSPKLKRELIAVNGYSEFMESTGKKPKHHVLSHDIIPASKPIAEKLQIQPESPVVELKRILYNDDQPLTFEVTHYPLDLFPGIDTFIADGVSMHDILKQQYKVVPTHNTKLLNVVYAQQEESKYLDCDIGDALFEIDKTAFTSNDQPIYCSLFLMHTNRVTFTINSPYT</sequence>